<accession>B2A474</accession>
<name>RNPA_NATTJ</name>
<evidence type="ECO:0000255" key="1">
    <source>
        <dbReference type="HAMAP-Rule" id="MF_00227"/>
    </source>
</evidence>
<comment type="function">
    <text evidence="1">RNaseP catalyzes the removal of the 5'-leader sequence from pre-tRNA to produce the mature 5'-terminus. It can also cleave other RNA substrates such as 4.5S RNA. The protein component plays an auxiliary but essential role in vivo by binding to the 5'-leader sequence and broadening the substrate specificity of the ribozyme.</text>
</comment>
<comment type="catalytic activity">
    <reaction evidence="1">
        <text>Endonucleolytic cleavage of RNA, removing 5'-extranucleotides from tRNA precursor.</text>
        <dbReference type="EC" id="3.1.26.5"/>
    </reaction>
</comment>
<comment type="subunit">
    <text evidence="1">Consists of a catalytic RNA component (M1 or rnpB) and a protein subunit.</text>
</comment>
<comment type="similarity">
    <text evidence="1">Belongs to the RnpA family.</text>
</comment>
<protein>
    <recommendedName>
        <fullName evidence="1">Ribonuclease P protein component</fullName>
        <shortName evidence="1">RNase P protein</shortName>
        <shortName evidence="1">RNaseP protein</shortName>
        <ecNumber evidence="1">3.1.26.5</ecNumber>
    </recommendedName>
    <alternativeName>
        <fullName evidence="1">Protein C5</fullName>
    </alternativeName>
</protein>
<feature type="chain" id="PRO_1000100375" description="Ribonuclease P protein component">
    <location>
        <begin position="1"/>
        <end position="115"/>
    </location>
</feature>
<dbReference type="EC" id="3.1.26.5" evidence="1"/>
<dbReference type="EMBL" id="CP001034">
    <property type="protein sequence ID" value="ACB86480.1"/>
    <property type="molecule type" value="Genomic_DNA"/>
</dbReference>
<dbReference type="RefSeq" id="WP_012449312.1">
    <property type="nucleotide sequence ID" value="NC_010718.1"/>
</dbReference>
<dbReference type="SMR" id="B2A474"/>
<dbReference type="FunCoup" id="B2A474">
    <property type="interactions" value="240"/>
</dbReference>
<dbReference type="STRING" id="457570.Nther_2934"/>
<dbReference type="KEGG" id="nth:Nther_2934"/>
<dbReference type="eggNOG" id="COG0594">
    <property type="taxonomic scope" value="Bacteria"/>
</dbReference>
<dbReference type="HOGENOM" id="CLU_117179_9_4_9"/>
<dbReference type="InParanoid" id="B2A474"/>
<dbReference type="OrthoDB" id="9810867at2"/>
<dbReference type="Proteomes" id="UP000001683">
    <property type="component" value="Chromosome"/>
</dbReference>
<dbReference type="GO" id="GO:0030677">
    <property type="term" value="C:ribonuclease P complex"/>
    <property type="evidence" value="ECO:0007669"/>
    <property type="project" value="TreeGrafter"/>
</dbReference>
<dbReference type="GO" id="GO:0042781">
    <property type="term" value="F:3'-tRNA processing endoribonuclease activity"/>
    <property type="evidence" value="ECO:0007669"/>
    <property type="project" value="TreeGrafter"/>
</dbReference>
<dbReference type="GO" id="GO:0004526">
    <property type="term" value="F:ribonuclease P activity"/>
    <property type="evidence" value="ECO:0007669"/>
    <property type="project" value="UniProtKB-UniRule"/>
</dbReference>
<dbReference type="GO" id="GO:0000049">
    <property type="term" value="F:tRNA binding"/>
    <property type="evidence" value="ECO:0007669"/>
    <property type="project" value="UniProtKB-UniRule"/>
</dbReference>
<dbReference type="GO" id="GO:0001682">
    <property type="term" value="P:tRNA 5'-leader removal"/>
    <property type="evidence" value="ECO:0007669"/>
    <property type="project" value="UniProtKB-UniRule"/>
</dbReference>
<dbReference type="Gene3D" id="3.30.230.10">
    <property type="match status" value="1"/>
</dbReference>
<dbReference type="HAMAP" id="MF_00227">
    <property type="entry name" value="RNase_P"/>
    <property type="match status" value="1"/>
</dbReference>
<dbReference type="InterPro" id="IPR020568">
    <property type="entry name" value="Ribosomal_Su5_D2-typ_SF"/>
</dbReference>
<dbReference type="InterPro" id="IPR014721">
    <property type="entry name" value="Ribsml_uS5_D2-typ_fold_subgr"/>
</dbReference>
<dbReference type="InterPro" id="IPR000100">
    <property type="entry name" value="RNase_P"/>
</dbReference>
<dbReference type="NCBIfam" id="TIGR00188">
    <property type="entry name" value="rnpA"/>
    <property type="match status" value="1"/>
</dbReference>
<dbReference type="PANTHER" id="PTHR33992">
    <property type="entry name" value="RIBONUCLEASE P PROTEIN COMPONENT"/>
    <property type="match status" value="1"/>
</dbReference>
<dbReference type="PANTHER" id="PTHR33992:SF1">
    <property type="entry name" value="RIBONUCLEASE P PROTEIN COMPONENT"/>
    <property type="match status" value="1"/>
</dbReference>
<dbReference type="Pfam" id="PF00825">
    <property type="entry name" value="Ribonuclease_P"/>
    <property type="match status" value="1"/>
</dbReference>
<dbReference type="SUPFAM" id="SSF54211">
    <property type="entry name" value="Ribosomal protein S5 domain 2-like"/>
    <property type="match status" value="1"/>
</dbReference>
<reference key="1">
    <citation type="submission" date="2008-04" db="EMBL/GenBank/DDBJ databases">
        <title>Complete sequence of chromosome of Natranaerobius thermophilus JW/NM-WN-LF.</title>
        <authorList>
            <consortium name="US DOE Joint Genome Institute"/>
            <person name="Copeland A."/>
            <person name="Lucas S."/>
            <person name="Lapidus A."/>
            <person name="Glavina del Rio T."/>
            <person name="Dalin E."/>
            <person name="Tice H."/>
            <person name="Bruce D."/>
            <person name="Goodwin L."/>
            <person name="Pitluck S."/>
            <person name="Chertkov O."/>
            <person name="Brettin T."/>
            <person name="Detter J.C."/>
            <person name="Han C."/>
            <person name="Kuske C.R."/>
            <person name="Schmutz J."/>
            <person name="Larimer F."/>
            <person name="Land M."/>
            <person name="Hauser L."/>
            <person name="Kyrpides N."/>
            <person name="Lykidis A."/>
            <person name="Mesbah N.M."/>
            <person name="Wiegel J."/>
        </authorList>
    </citation>
    <scope>NUCLEOTIDE SEQUENCE [LARGE SCALE GENOMIC DNA]</scope>
    <source>
        <strain>ATCC BAA-1301 / DSM 18059 / JW/NM-WN-LF</strain>
    </source>
</reference>
<gene>
    <name evidence="1" type="primary">rnpA</name>
    <name type="ordered locus">Nther_2934</name>
</gene>
<keyword id="KW-0255">Endonuclease</keyword>
<keyword id="KW-0378">Hydrolase</keyword>
<keyword id="KW-0540">Nuclease</keyword>
<keyword id="KW-1185">Reference proteome</keyword>
<keyword id="KW-0694">RNA-binding</keyword>
<keyword id="KW-0819">tRNA processing</keyword>
<organism>
    <name type="scientific">Natranaerobius thermophilus (strain ATCC BAA-1301 / DSM 18059 / JW/NM-WN-LF)</name>
    <dbReference type="NCBI Taxonomy" id="457570"/>
    <lineage>
        <taxon>Bacteria</taxon>
        <taxon>Bacillati</taxon>
        <taxon>Bacillota</taxon>
        <taxon>Clostridia</taxon>
        <taxon>Natranaerobiales</taxon>
        <taxon>Natranaerobiaceae</taxon>
        <taxon>Natranaerobius</taxon>
    </lineage>
</organism>
<sequence>MSQIVTLKKNYQFRRVFRYGQSYATKYIVLFVLENSLNINRVGFSVGKKVGNSVTRNRVKRLLREVYRLNNPNMMQGYDLILLARFRADELDYHKCQREFIRLTKKSKLLQKNVI</sequence>
<proteinExistence type="inferred from homology"/>